<gene>
    <name evidence="1" type="primary">rnhA</name>
    <name type="ordered locus">HEAR2319</name>
</gene>
<proteinExistence type="inferred from homology"/>
<reference key="1">
    <citation type="journal article" date="2007" name="PLoS Genet.">
        <title>A tale of two oxidation states: bacterial colonization of arsenic-rich environments.</title>
        <authorList>
            <person name="Muller D."/>
            <person name="Medigue C."/>
            <person name="Koechler S."/>
            <person name="Barbe V."/>
            <person name="Barakat M."/>
            <person name="Talla E."/>
            <person name="Bonnefoy V."/>
            <person name="Krin E."/>
            <person name="Arsene-Ploetze F."/>
            <person name="Carapito C."/>
            <person name="Chandler M."/>
            <person name="Cournoyer B."/>
            <person name="Cruveiller S."/>
            <person name="Dossat C."/>
            <person name="Duval S."/>
            <person name="Heymann M."/>
            <person name="Leize E."/>
            <person name="Lieutaud A."/>
            <person name="Lievremont D."/>
            <person name="Makita Y."/>
            <person name="Mangenot S."/>
            <person name="Nitschke W."/>
            <person name="Ortet P."/>
            <person name="Perdrial N."/>
            <person name="Schoepp B."/>
            <person name="Siguier P."/>
            <person name="Simeonova D.D."/>
            <person name="Rouy Z."/>
            <person name="Segurens B."/>
            <person name="Turlin E."/>
            <person name="Vallenet D."/>
            <person name="van Dorsselaer A."/>
            <person name="Weiss S."/>
            <person name="Weissenbach J."/>
            <person name="Lett M.-C."/>
            <person name="Danchin A."/>
            <person name="Bertin P.N."/>
        </authorList>
    </citation>
    <scope>NUCLEOTIDE SEQUENCE [LARGE SCALE GENOMIC DNA]</scope>
    <source>
        <strain>ULPAs1</strain>
    </source>
</reference>
<dbReference type="EC" id="3.1.26.4" evidence="1"/>
<dbReference type="EMBL" id="CU207211">
    <property type="protein sequence ID" value="CAL62450.1"/>
    <property type="molecule type" value="Genomic_DNA"/>
</dbReference>
<dbReference type="SMR" id="A4G7G3"/>
<dbReference type="STRING" id="204773.HEAR2319"/>
<dbReference type="KEGG" id="har:HEAR2319"/>
<dbReference type="eggNOG" id="COG0328">
    <property type="taxonomic scope" value="Bacteria"/>
</dbReference>
<dbReference type="HOGENOM" id="CLU_030894_6_0_4"/>
<dbReference type="OrthoDB" id="7845843at2"/>
<dbReference type="Proteomes" id="UP000006697">
    <property type="component" value="Chromosome"/>
</dbReference>
<dbReference type="GO" id="GO:0005737">
    <property type="term" value="C:cytoplasm"/>
    <property type="evidence" value="ECO:0007669"/>
    <property type="project" value="UniProtKB-SubCell"/>
</dbReference>
<dbReference type="GO" id="GO:0000287">
    <property type="term" value="F:magnesium ion binding"/>
    <property type="evidence" value="ECO:0007669"/>
    <property type="project" value="UniProtKB-UniRule"/>
</dbReference>
<dbReference type="GO" id="GO:0003676">
    <property type="term" value="F:nucleic acid binding"/>
    <property type="evidence" value="ECO:0007669"/>
    <property type="project" value="InterPro"/>
</dbReference>
<dbReference type="GO" id="GO:0004523">
    <property type="term" value="F:RNA-DNA hybrid ribonuclease activity"/>
    <property type="evidence" value="ECO:0007669"/>
    <property type="project" value="UniProtKB-UniRule"/>
</dbReference>
<dbReference type="GO" id="GO:0043137">
    <property type="term" value="P:DNA replication, removal of RNA primer"/>
    <property type="evidence" value="ECO:0007669"/>
    <property type="project" value="TreeGrafter"/>
</dbReference>
<dbReference type="CDD" id="cd09278">
    <property type="entry name" value="RNase_HI_prokaryote_like"/>
    <property type="match status" value="1"/>
</dbReference>
<dbReference type="FunFam" id="3.30.420.10:FF:000089">
    <property type="entry name" value="Ribonuclease H"/>
    <property type="match status" value="1"/>
</dbReference>
<dbReference type="Gene3D" id="3.30.420.10">
    <property type="entry name" value="Ribonuclease H-like superfamily/Ribonuclease H"/>
    <property type="match status" value="1"/>
</dbReference>
<dbReference type="HAMAP" id="MF_00042">
    <property type="entry name" value="RNase_H"/>
    <property type="match status" value="1"/>
</dbReference>
<dbReference type="InterPro" id="IPR050092">
    <property type="entry name" value="RNase_H"/>
</dbReference>
<dbReference type="InterPro" id="IPR012337">
    <property type="entry name" value="RNaseH-like_sf"/>
</dbReference>
<dbReference type="InterPro" id="IPR002156">
    <property type="entry name" value="RNaseH_domain"/>
</dbReference>
<dbReference type="InterPro" id="IPR036397">
    <property type="entry name" value="RNaseH_sf"/>
</dbReference>
<dbReference type="InterPro" id="IPR022892">
    <property type="entry name" value="RNaseHI"/>
</dbReference>
<dbReference type="NCBIfam" id="NF001236">
    <property type="entry name" value="PRK00203.1"/>
    <property type="match status" value="1"/>
</dbReference>
<dbReference type="PANTHER" id="PTHR10642">
    <property type="entry name" value="RIBONUCLEASE H1"/>
    <property type="match status" value="1"/>
</dbReference>
<dbReference type="PANTHER" id="PTHR10642:SF26">
    <property type="entry name" value="RIBONUCLEASE H1"/>
    <property type="match status" value="1"/>
</dbReference>
<dbReference type="Pfam" id="PF00075">
    <property type="entry name" value="RNase_H"/>
    <property type="match status" value="1"/>
</dbReference>
<dbReference type="SUPFAM" id="SSF53098">
    <property type="entry name" value="Ribonuclease H-like"/>
    <property type="match status" value="1"/>
</dbReference>
<dbReference type="PROSITE" id="PS50879">
    <property type="entry name" value="RNASE_H_1"/>
    <property type="match status" value="1"/>
</dbReference>
<protein>
    <recommendedName>
        <fullName evidence="1">Ribonuclease H</fullName>
        <shortName evidence="1">RNase H</shortName>
        <ecNumber evidence="1">3.1.26.4</ecNumber>
    </recommendedName>
</protein>
<sequence>MEKIDIFTDGACKGNPGRGGWGALLVMGEREKELFGGEPGTTNNRMELKAVIEALNALTRPCEVIVHTDSQYVQKGISEWIHGWKARGWKTAARAPVKNVDLWQALDAAQARHQIEWRWVRGHNGHVGNERADALANRGVETVNSN</sequence>
<comment type="function">
    <text evidence="1">Endonuclease that specifically degrades the RNA of RNA-DNA hybrids.</text>
</comment>
<comment type="catalytic activity">
    <reaction evidence="1">
        <text>Endonucleolytic cleavage to 5'-phosphomonoester.</text>
        <dbReference type="EC" id="3.1.26.4"/>
    </reaction>
</comment>
<comment type="cofactor">
    <cofactor evidence="1">
        <name>Mg(2+)</name>
        <dbReference type="ChEBI" id="CHEBI:18420"/>
    </cofactor>
    <text evidence="1">Binds 1 Mg(2+) ion per subunit. May bind a second metal ion at a regulatory site, or after substrate binding.</text>
</comment>
<comment type="subunit">
    <text evidence="1">Monomer.</text>
</comment>
<comment type="subcellular location">
    <subcellularLocation>
        <location evidence="1">Cytoplasm</location>
    </subcellularLocation>
</comment>
<comment type="similarity">
    <text evidence="1">Belongs to the RNase H family.</text>
</comment>
<accession>A4G7G3</accession>
<organism>
    <name type="scientific">Herminiimonas arsenicoxydans</name>
    <dbReference type="NCBI Taxonomy" id="204773"/>
    <lineage>
        <taxon>Bacteria</taxon>
        <taxon>Pseudomonadati</taxon>
        <taxon>Pseudomonadota</taxon>
        <taxon>Betaproteobacteria</taxon>
        <taxon>Burkholderiales</taxon>
        <taxon>Oxalobacteraceae</taxon>
        <taxon>Herminiimonas</taxon>
    </lineage>
</organism>
<feature type="chain" id="PRO_0000332614" description="Ribonuclease H">
    <location>
        <begin position="1"/>
        <end position="146"/>
    </location>
</feature>
<feature type="domain" description="RNase H type-1" evidence="2">
    <location>
        <begin position="1"/>
        <end position="141"/>
    </location>
</feature>
<feature type="binding site" evidence="1">
    <location>
        <position position="9"/>
    </location>
    <ligand>
        <name>Mg(2+)</name>
        <dbReference type="ChEBI" id="CHEBI:18420"/>
        <label>1</label>
    </ligand>
</feature>
<feature type="binding site" evidence="1">
    <location>
        <position position="9"/>
    </location>
    <ligand>
        <name>Mg(2+)</name>
        <dbReference type="ChEBI" id="CHEBI:18420"/>
        <label>2</label>
    </ligand>
</feature>
<feature type="binding site" evidence="1">
    <location>
        <position position="47"/>
    </location>
    <ligand>
        <name>Mg(2+)</name>
        <dbReference type="ChEBI" id="CHEBI:18420"/>
        <label>1</label>
    </ligand>
</feature>
<feature type="binding site" evidence="1">
    <location>
        <position position="69"/>
    </location>
    <ligand>
        <name>Mg(2+)</name>
        <dbReference type="ChEBI" id="CHEBI:18420"/>
        <label>1</label>
    </ligand>
</feature>
<feature type="binding site" evidence="1">
    <location>
        <position position="133"/>
    </location>
    <ligand>
        <name>Mg(2+)</name>
        <dbReference type="ChEBI" id="CHEBI:18420"/>
        <label>2</label>
    </ligand>
</feature>
<name>RNH_HERAR</name>
<keyword id="KW-0963">Cytoplasm</keyword>
<keyword id="KW-0255">Endonuclease</keyword>
<keyword id="KW-0378">Hydrolase</keyword>
<keyword id="KW-0460">Magnesium</keyword>
<keyword id="KW-0479">Metal-binding</keyword>
<keyword id="KW-0540">Nuclease</keyword>
<keyword id="KW-1185">Reference proteome</keyword>
<evidence type="ECO:0000255" key="1">
    <source>
        <dbReference type="HAMAP-Rule" id="MF_00042"/>
    </source>
</evidence>
<evidence type="ECO:0000255" key="2">
    <source>
        <dbReference type="PROSITE-ProRule" id="PRU00408"/>
    </source>
</evidence>